<keyword id="KW-0007">Acetylation</keyword>
<keyword id="KW-0520">NAD</keyword>
<keyword id="KW-1185">Reference proteome</keyword>
<keyword id="KW-0808">Transferase</keyword>
<keyword id="KW-0819">tRNA processing</keyword>
<comment type="function">
    <text evidence="1">Catalyzes the last step of tRNA splicing, the transfer of the splice junction 2'-phosphate from ligated tRNA to NAD to produce ADP-ribose 1''-2'' cyclic phosphate.</text>
</comment>
<comment type="catalytic activity">
    <reaction>
        <text>2'-phospho-[ligated tRNA] + NAD(+) = mature tRNA + ADP-alpha-D-ribose 1'',2''-cyclic phosphate + nicotinamide</text>
        <dbReference type="Rhea" id="RHEA:23324"/>
        <dbReference type="Rhea" id="RHEA-COMP:11106"/>
        <dbReference type="Rhea" id="RHEA-COMP:11107"/>
        <dbReference type="ChEBI" id="CHEBI:17154"/>
        <dbReference type="ChEBI" id="CHEBI:57540"/>
        <dbReference type="ChEBI" id="CHEBI:76596"/>
        <dbReference type="ChEBI" id="CHEBI:82883"/>
        <dbReference type="ChEBI" id="CHEBI:85027"/>
        <dbReference type="EC" id="2.7.1.160"/>
    </reaction>
</comment>
<comment type="similarity">
    <text evidence="4">Belongs to the KptA/TPT1 family.</text>
</comment>
<comment type="sequence caution" evidence="4">
    <conflict type="erroneous initiation">
        <sequence resource="EMBL-CDS" id="AAI03211"/>
    </conflict>
</comment>
<organism>
    <name type="scientific">Bos taurus</name>
    <name type="common">Bovine</name>
    <dbReference type="NCBI Taxonomy" id="9913"/>
    <lineage>
        <taxon>Eukaryota</taxon>
        <taxon>Metazoa</taxon>
        <taxon>Chordata</taxon>
        <taxon>Craniata</taxon>
        <taxon>Vertebrata</taxon>
        <taxon>Euteleostomi</taxon>
        <taxon>Mammalia</taxon>
        <taxon>Eutheria</taxon>
        <taxon>Laurasiatheria</taxon>
        <taxon>Artiodactyla</taxon>
        <taxon>Ruminantia</taxon>
        <taxon>Pecora</taxon>
        <taxon>Bovidae</taxon>
        <taxon>Bovinae</taxon>
        <taxon>Bos</taxon>
    </lineage>
</organism>
<reference key="1">
    <citation type="journal article" date="2005" name="BMC Genomics">
        <title>Characterization of 954 bovine full-CDS cDNA sequences.</title>
        <authorList>
            <person name="Harhay G.P."/>
            <person name="Sonstegard T.S."/>
            <person name="Keele J.W."/>
            <person name="Heaton M.P."/>
            <person name="Clawson M.L."/>
            <person name="Snelling W.M."/>
            <person name="Wiedmann R.T."/>
            <person name="Van Tassell C.P."/>
            <person name="Smith T.P.L."/>
        </authorList>
    </citation>
    <scope>NUCLEOTIDE SEQUENCE [LARGE SCALE MRNA]</scope>
</reference>
<reference key="2">
    <citation type="submission" date="2005-08" db="EMBL/GenBank/DDBJ databases">
        <authorList>
            <consortium name="NIH - Mammalian Gene Collection (MGC) project"/>
        </authorList>
    </citation>
    <scope>NUCLEOTIDE SEQUENCE [LARGE SCALE MRNA] OF 27-254</scope>
    <source>
        <strain>Hereford</strain>
        <tissue>Hypothalamus</tissue>
    </source>
</reference>
<sequence length="254" mass="27791">MNSFGGRRRETAGPKGRRAHRPPQDQDRDVQLSKALSYALRHGALKLGLPMGADGFVPLDALLQLPQFRSFSAEDVQRVVDTNVKQRFALQPGDPSTGPLIRANQGHSLQVPELELEPLETPQALPLMLVHGTFRQHWPSILLKGLSCRGRTHIHLAPGLPGDPGVISGMRPNCEVAVFINGPLALADGIPFFRSTNGVILTPGNADGVLPPKYFKEALQLRPTRKPLSLAGNEEKEHQRDSKHSSRGRGMTQQ</sequence>
<gene>
    <name type="primary">TRPT1</name>
</gene>
<evidence type="ECO:0000250" key="1"/>
<evidence type="ECO:0000250" key="2">
    <source>
        <dbReference type="UniProtKB" id="Q86TN4"/>
    </source>
</evidence>
<evidence type="ECO:0000256" key="3">
    <source>
        <dbReference type="SAM" id="MobiDB-lite"/>
    </source>
</evidence>
<evidence type="ECO:0000305" key="4"/>
<dbReference type="EC" id="2.7.1.160"/>
<dbReference type="EMBL" id="DN524407">
    <property type="status" value="NOT_ANNOTATED_CDS"/>
    <property type="molecule type" value="mRNA"/>
</dbReference>
<dbReference type="EMBL" id="BC103210">
    <property type="protein sequence ID" value="AAI03211.2"/>
    <property type="status" value="ALT_INIT"/>
    <property type="molecule type" value="mRNA"/>
</dbReference>
<dbReference type="SMR" id="Q3ZBM7"/>
<dbReference type="FunCoup" id="Q3ZBM7">
    <property type="interactions" value="816"/>
</dbReference>
<dbReference type="STRING" id="9913.ENSBTAP00000022022"/>
<dbReference type="PaxDb" id="9913-ENSBTAP00000022022"/>
<dbReference type="eggNOG" id="KOG2278">
    <property type="taxonomic scope" value="Eukaryota"/>
</dbReference>
<dbReference type="InParanoid" id="Q3ZBM7"/>
<dbReference type="OrthoDB" id="419694at2759"/>
<dbReference type="Proteomes" id="UP000009136">
    <property type="component" value="Unplaced"/>
</dbReference>
<dbReference type="GO" id="GO:0000215">
    <property type="term" value="F:tRNA 2'-phosphotransferase activity"/>
    <property type="evidence" value="ECO:0000318"/>
    <property type="project" value="GO_Central"/>
</dbReference>
<dbReference type="GO" id="GO:0006388">
    <property type="term" value="P:tRNA splicing, via endonucleolytic cleavage and ligation"/>
    <property type="evidence" value="ECO:0000318"/>
    <property type="project" value="GO_Central"/>
</dbReference>
<dbReference type="Gene3D" id="3.20.170.30">
    <property type="match status" value="1"/>
</dbReference>
<dbReference type="Gene3D" id="1.10.10.970">
    <property type="entry name" value="RNA 2'-phosphotransferase, Tpt1/KptA family, N-terminal domain"/>
    <property type="match status" value="1"/>
</dbReference>
<dbReference type="InterPro" id="IPR002745">
    <property type="entry name" value="Ptrans_KptA/Tpt1"/>
</dbReference>
<dbReference type="InterPro" id="IPR042081">
    <property type="entry name" value="RNA_2'-PTrans_C"/>
</dbReference>
<dbReference type="InterPro" id="IPR042080">
    <property type="entry name" value="RNA_2'-PTrans_N"/>
</dbReference>
<dbReference type="PANTHER" id="PTHR12684">
    <property type="entry name" value="PUTATIVE PHOSPHOTRANSFERASE"/>
    <property type="match status" value="1"/>
</dbReference>
<dbReference type="PANTHER" id="PTHR12684:SF2">
    <property type="entry name" value="TRNA 2'-PHOSPHOTRANSFERASE 1"/>
    <property type="match status" value="1"/>
</dbReference>
<dbReference type="Pfam" id="PF01885">
    <property type="entry name" value="PTS_2-RNA"/>
    <property type="match status" value="1"/>
</dbReference>
<dbReference type="SUPFAM" id="SSF56399">
    <property type="entry name" value="ADP-ribosylation"/>
    <property type="match status" value="1"/>
</dbReference>
<proteinExistence type="evidence at transcript level"/>
<protein>
    <recommendedName>
        <fullName>tRNA 2'-phosphotransferase 1</fullName>
        <ecNumber>2.7.1.160</ecNumber>
    </recommendedName>
</protein>
<accession>Q3ZBM7</accession>
<feature type="chain" id="PRO_0000273362" description="tRNA 2'-phosphotransferase 1">
    <location>
        <begin position="1"/>
        <end position="254"/>
    </location>
</feature>
<feature type="region of interest" description="Disordered" evidence="3">
    <location>
        <begin position="1"/>
        <end position="30"/>
    </location>
</feature>
<feature type="region of interest" description="Disordered" evidence="3">
    <location>
        <begin position="225"/>
        <end position="254"/>
    </location>
</feature>
<feature type="compositionally biased region" description="Basic and acidic residues" evidence="3">
    <location>
        <begin position="233"/>
        <end position="244"/>
    </location>
</feature>
<feature type="modified residue" description="N-acetylmethionine" evidence="2">
    <location>
        <position position="1"/>
    </location>
</feature>
<name>TRPT1_BOVIN</name>